<protein>
    <recommendedName>
        <fullName>Hemolysin</fullName>
    </recommendedName>
</protein>
<reference key="1">
    <citation type="journal article" date="1988" name="Mol. Microbiol.">
        <title>Extracellular proteins of Vibrio cholerae: nucleotide sequence of the structural gene (hlyA) for the haemolysin of the haemolytic El Tor strain O17 and characterization of the hlyA mutation in the non-haemolytic classical strain 569B.</title>
        <authorList>
            <person name="Alm R.A."/>
            <person name="Stroeher U.H."/>
            <person name="Manning P.A."/>
        </authorList>
    </citation>
    <scope>NUCLEOTIDE SEQUENCE [GENOMIC DNA]</scope>
    <source>
        <strain>El Tor O17 / Serotype O1</strain>
    </source>
</reference>
<reference key="2">
    <citation type="submission" date="1997-06" db="EMBL/GenBank/DDBJ databases">
        <authorList>
            <person name="Manning P.A."/>
        </authorList>
    </citation>
    <scope>SEQUENCE REVISION</scope>
</reference>
<reference key="3">
    <citation type="journal article" date="1988" name="Infect. Immun.">
        <title>Nucleotide sequences and comparison of the hemolysin determinants of Vibrio cholerae El Tor RV79(Hly+) and RV79(Hly-) and classical 569B(Hly-).</title>
        <authorList>
            <person name="Rader A.E."/>
            <person name="Murphy J.R."/>
        </authorList>
    </citation>
    <scope>NUCLEOTIDE SEQUENCE [GENOMIC DNA]</scope>
    <source>
        <strain>El Tor RV79</strain>
    </source>
</reference>
<reference key="4">
    <citation type="journal article" date="1990" name="Infect. Immun.">
        <title>Two-step processing for activation of the cytolysin/hemolysin of Vibrio cholerae O1 biotype El Tor: nucleotide sequence of the structural gene (hlyA) and characterization of the processed products.</title>
        <authorList>
            <person name="Yamamoto K."/>
            <person name="Ichinose Y."/>
            <person name="Shinagawa H."/>
            <person name="Makino K."/>
            <person name="Nakata A."/>
            <person name="Iwanaga M."/>
            <person name="Honda T."/>
            <person name="Miwatani T."/>
        </authorList>
    </citation>
    <scope>NUCLEOTIDE SEQUENCE [GENOMIC DNA]</scope>
    <scope>PROTEIN SEQUENCE OF 26-45 AND 158-177</scope>
    <source>
        <strain>El Tor N86 / Serotype O1</strain>
    </source>
</reference>
<reference key="5">
    <citation type="journal article" date="2000" name="Nature">
        <title>DNA sequence of both chromosomes of the cholera pathogen Vibrio cholerae.</title>
        <authorList>
            <person name="Heidelberg J.F."/>
            <person name="Eisen J.A."/>
            <person name="Nelson W.C."/>
            <person name="Clayton R.A."/>
            <person name="Gwinn M.L."/>
            <person name="Dodson R.J."/>
            <person name="Haft D.H."/>
            <person name="Hickey E.K."/>
            <person name="Peterson J.D."/>
            <person name="Umayam L.A."/>
            <person name="Gill S.R."/>
            <person name="Nelson K.E."/>
            <person name="Read T.D."/>
            <person name="Tettelin H."/>
            <person name="Richardson D.L."/>
            <person name="Ermolaeva M.D."/>
            <person name="Vamathevan J.J."/>
            <person name="Bass S."/>
            <person name="Qin H."/>
            <person name="Dragoi I."/>
            <person name="Sellers P."/>
            <person name="McDonald L.A."/>
            <person name="Utterback T.R."/>
            <person name="Fleischmann R.D."/>
            <person name="Nierman W.C."/>
            <person name="White O."/>
            <person name="Salzberg S.L."/>
            <person name="Smith H.O."/>
            <person name="Colwell R.R."/>
            <person name="Mekalanos J.J."/>
            <person name="Venter J.C."/>
            <person name="Fraser C.M."/>
        </authorList>
    </citation>
    <scope>NUCLEOTIDE SEQUENCE [LARGE SCALE GENOMIC DNA]</scope>
    <source>
        <strain>ATCC 39315 / El Tor Inaba N16961</strain>
    </source>
</reference>
<reference key="6">
    <citation type="journal article" date="2005" name="J. Mol. Biol.">
        <title>Crystal structure of the Vibrio cholerae cytolysin (VCC) pro-toxin and its assembly into a heptameric transmembrane pore.</title>
        <authorList>
            <person name="Olson R."/>
            <person name="Gouaux E."/>
        </authorList>
    </citation>
    <scope>X-RAY CRYSTALLOGRAPHY (2.3 ANGSTROMS) OF 26-741</scope>
    <scope>SUBUNIT</scope>
    <scope>FUNCTION</scope>
    <scope>PARTIAL PROTEIN SEQUENCE</scope>
    <scope>IDENTIFICATION BY MASS SPECTROMETRY</scope>
    <scope>ACTIVATION BY PROTEOLYTIC CLEAVAGE</scope>
    <scope>SUBCELLULAR LOCATION</scope>
    <scope>DOMAIN</scope>
    <scope>DISULFIDE BONDS</scope>
</reference>
<name>HLYA_VIBCH</name>
<proteinExistence type="evidence at protein level"/>
<keyword id="KW-0002">3D-structure</keyword>
<keyword id="KW-0204">Cytolysis</keyword>
<keyword id="KW-0903">Direct protein sequencing</keyword>
<keyword id="KW-1015">Disulfide bond</keyword>
<keyword id="KW-0354">Hemolysis</keyword>
<keyword id="KW-1032">Host cell membrane</keyword>
<keyword id="KW-1043">Host membrane</keyword>
<keyword id="KW-0430">Lectin</keyword>
<keyword id="KW-0472">Membrane</keyword>
<keyword id="KW-1185">Reference proteome</keyword>
<keyword id="KW-0964">Secreted</keyword>
<keyword id="KW-0732">Signal</keyword>
<keyword id="KW-0800">Toxin</keyword>
<keyword id="KW-0812">Transmembrane</keyword>
<keyword id="KW-1134">Transmembrane beta strand</keyword>
<keyword id="KW-0843">Virulence</keyword>
<sequence>MPKLNRCAIAIFTILSAISSPTLLANINEPSGEAADIISQVADSHAIKYYNAADWQAEDNALPSLAELRDLVINQQKRVLVDFSQISDAEGQAEMQAQFRKAYGVGFANQFIVITEHKGELLFTPFDQAEEVDPQLLEAPRTARLLARSGFASPAPANSETNTLPHVAFYISVNRAISDEECTFNNSWLWKNEKGSRPFCKDANISLIYRVNLERSLQYGIVGSATPDAKIVRISLDDDSTGAGIHLNDQLGYRQFGASYTTLDAYFREWSTDAIAQDYRFVFNASNNKAQILKTFPVDNINEKFERKEVSGFELGVTGGVEVSGDGPKAKLEARASYTQSRWLTYNTQDYRIERNAKNAQAVSFTWNRQQYATAESLLNRSTDALWVNTYPVDVNRISPLSYASFVPKMDVIYKASATETGSTDFIIDSSVNIRPIYNGAYKHYYVVGAHQSYHGFEDTPRRRITKSASFTVDWDHPVFTGGRPVNLQLASFNNRCIQVDAQGRLAANTCDSQQSAQSFIYDQLGRYVSASNTKLCLDGEALDALQPCNQNLTQRWEWRKGTDELTNVYSGESLGHDKQTGELGLYASSNDAVSLRTITAYTDVFNAQESSPILGYTQGKMNQQRVGQDHRLYVRAGAAIDALGSASDLLVGGNGGSLSSVDLSGVKSITATSGDFQYGGQQLVALTFTYQDGRQQTVGSKAYVTNAHEDRFDLPAAAKITQLKIWSDDWLVKGVQFDLN</sequence>
<evidence type="ECO:0000255" key="1">
    <source>
        <dbReference type="PROSITE-ProRule" id="PRU00174"/>
    </source>
</evidence>
<evidence type="ECO:0000269" key="2">
    <source>
    </source>
</evidence>
<evidence type="ECO:0000269" key="3">
    <source>
    </source>
</evidence>
<evidence type="ECO:0000305" key="4"/>
<evidence type="ECO:0007829" key="5">
    <source>
        <dbReference type="PDB" id="1XEZ"/>
    </source>
</evidence>
<evidence type="ECO:0007829" key="6">
    <source>
        <dbReference type="PDB" id="3O44"/>
    </source>
</evidence>
<organism>
    <name type="scientific">Vibrio cholerae serotype O1 (strain ATCC 39315 / El Tor Inaba N16961)</name>
    <dbReference type="NCBI Taxonomy" id="243277"/>
    <lineage>
        <taxon>Bacteria</taxon>
        <taxon>Pseudomonadati</taxon>
        <taxon>Pseudomonadota</taxon>
        <taxon>Gammaproteobacteria</taxon>
        <taxon>Vibrionales</taxon>
        <taxon>Vibrionaceae</taxon>
        <taxon>Vibrio</taxon>
    </lineage>
</organism>
<gene>
    <name type="primary">hlyA</name>
    <name type="ordered locus">VC_A0219</name>
</gene>
<accession>P09545</accession>
<accession>O08197</accession>
<accession>O08290</accession>
<accession>Q56641</accession>
<accession>Q99290</accession>
<accession>Q9KMU9</accession>
<comment type="function">
    <text evidence="2">Bacterial hemolysin that causes cytolysis by forming heptameric pores in target host membranes.</text>
</comment>
<comment type="subunit">
    <text evidence="2">Monomer. Homoheptamer. After binding to target membranes the protein assembles into a heptameric pre-pore complex. Proteolytic cleavage triggers a conformation change that is required for membrane insertion and pore formation.</text>
</comment>
<comment type="interaction">
    <interactant intactId="EBI-6409539">
        <id>P09545</id>
    </interactant>
    <interactant intactId="EBI-6409539">
        <id>P09545</id>
        <label>hlyA</label>
    </interactant>
    <organismsDiffer>false</organismsDiffer>
    <experiments>4</experiments>
</comment>
<comment type="subcellular location">
    <subcellularLocation>
        <location evidence="2">Secreted</location>
    </subcellularLocation>
    <subcellularLocation>
        <location evidence="2">Host cell membrane</location>
        <topology evidence="2">Multi-pass membrane protein</topology>
    </subcellularLocation>
    <text>In the hemolytic biotype El Tor the 80 kDa hemolysin precursor is secreted as monomer. After binding to target membranes the protein assembles into a heptameric prepore complex. Proteolytic cleavage triggers a conformation change that is required for membrane insertion and pore formation.</text>
</comment>
<comment type="induction">
    <text evidence="4">By hemolysin B cytoplasmic protein.</text>
</comment>
<comment type="domain">
    <text evidence="2">May bind to glycans on target cells via the C-terminal beta-prism domain.</text>
</comment>
<comment type="PTM">
    <text>Proteolytical cleavage is required to convert the 80 kDa hemolysin precursor into the active 65 kDa hemolysin.</text>
</comment>
<comment type="similarity">
    <text evidence="4">Belongs to the HlyA hemolysin family.</text>
</comment>
<feature type="signal peptide" evidence="3">
    <location>
        <begin position="1"/>
        <end position="25"/>
    </location>
</feature>
<feature type="propeptide" id="PRO_0000013357" evidence="3">
    <location>
        <begin position="26"/>
        <end position="157"/>
    </location>
</feature>
<feature type="chain" id="PRO_0000013358" description="Hemolysin">
    <location>
        <begin position="158"/>
        <end position="741"/>
    </location>
</feature>
<feature type="domain" description="Ricin B-type lectin" evidence="1">
    <location>
        <begin position="484"/>
        <end position="575"/>
    </location>
</feature>
<feature type="region of interest" description="Beta-prism domain">
    <location>
        <begin position="607"/>
        <end position="741"/>
    </location>
</feature>
<feature type="site" description="Susceptible to proteolytic cleavage">
    <location>
        <begin position="144"/>
        <end position="145"/>
    </location>
</feature>
<feature type="site" description="Susceptible to proteolytic cleavage">
    <location>
        <begin position="148"/>
        <end position="149"/>
    </location>
</feature>
<feature type="disulfide bond" evidence="1 2">
    <location>
        <begin position="182"/>
        <end position="200"/>
    </location>
</feature>
<feature type="disulfide bond" evidence="1 2">
    <location>
        <begin position="497"/>
        <end position="511"/>
    </location>
</feature>
<feature type="disulfide bond" evidence="1 2">
    <location>
        <begin position="537"/>
        <end position="549"/>
    </location>
</feature>
<feature type="sequence variant" description="In strain: nonhemolytic 569B.">
    <location>
        <begin position="245"/>
        <end position="741"/>
    </location>
</feature>
<feature type="sequence variant" description="In strain: N16961.">
    <original>S</original>
    <variation>F</variation>
    <location>
        <position position="453"/>
    </location>
</feature>
<feature type="sequence conflict" description="In Ref. 3; AAA27528." evidence="4" ref="3">
    <original>T</original>
    <variation>S</variation>
    <location>
        <position position="115"/>
    </location>
</feature>
<feature type="sequence conflict" description="In Ref. 3; AAA27528." evidence="4" ref="3">
    <original>G</original>
    <variation>S</variation>
    <location>
        <position position="562"/>
    </location>
</feature>
<feature type="strand" evidence="5">
    <location>
        <begin position="47"/>
        <end position="51"/>
    </location>
</feature>
<feature type="helix" evidence="5">
    <location>
        <begin position="52"/>
        <end position="56"/>
    </location>
</feature>
<feature type="helix" evidence="5">
    <location>
        <begin position="65"/>
        <end position="72"/>
    </location>
</feature>
<feature type="strand" evidence="5">
    <location>
        <begin position="78"/>
        <end position="82"/>
    </location>
</feature>
<feature type="helix" evidence="5">
    <location>
        <begin position="89"/>
        <end position="103"/>
    </location>
</feature>
<feature type="strand" evidence="5">
    <location>
        <begin position="109"/>
        <end position="117"/>
    </location>
</feature>
<feature type="strand" evidence="5">
    <location>
        <begin position="120"/>
        <end position="128"/>
    </location>
</feature>
<feature type="turn" evidence="5">
    <location>
        <begin position="161"/>
        <end position="163"/>
    </location>
</feature>
<feature type="strand" evidence="5">
    <location>
        <begin position="166"/>
        <end position="176"/>
    </location>
</feature>
<feature type="turn" evidence="5">
    <location>
        <begin position="179"/>
        <end position="182"/>
    </location>
</feature>
<feature type="strand" evidence="5">
    <location>
        <begin position="183"/>
        <end position="186"/>
    </location>
</feature>
<feature type="turn" evidence="5">
    <location>
        <begin position="189"/>
        <end position="193"/>
    </location>
</feature>
<feature type="strand" evidence="5">
    <location>
        <begin position="196"/>
        <end position="199"/>
    </location>
</feature>
<feature type="strand" evidence="5">
    <location>
        <begin position="204"/>
        <end position="217"/>
    </location>
</feature>
<feature type="strand" evidence="5">
    <location>
        <begin position="219"/>
        <end position="221"/>
    </location>
</feature>
<feature type="strand" evidence="5">
    <location>
        <begin position="229"/>
        <end position="236"/>
    </location>
</feature>
<feature type="turn" evidence="5">
    <location>
        <begin position="238"/>
        <end position="240"/>
    </location>
</feature>
<feature type="strand" evidence="5">
    <location>
        <begin position="244"/>
        <end position="246"/>
    </location>
</feature>
<feature type="strand" evidence="5">
    <location>
        <begin position="253"/>
        <end position="257"/>
    </location>
</feature>
<feature type="strand" evidence="5">
    <location>
        <begin position="263"/>
        <end position="287"/>
    </location>
</feature>
<feature type="strand" evidence="5">
    <location>
        <begin position="291"/>
        <end position="299"/>
    </location>
</feature>
<feature type="strand" evidence="5">
    <location>
        <begin position="306"/>
        <end position="317"/>
    </location>
</feature>
<feature type="turn" evidence="5">
    <location>
        <begin position="321"/>
        <end position="323"/>
    </location>
</feature>
<feature type="helix" evidence="5">
    <location>
        <begin position="327"/>
        <end position="329"/>
    </location>
</feature>
<feature type="strand" evidence="5">
    <location>
        <begin position="336"/>
        <end position="347"/>
    </location>
</feature>
<feature type="strand" evidence="5">
    <location>
        <begin position="351"/>
        <end position="356"/>
    </location>
</feature>
<feature type="strand" evidence="5">
    <location>
        <begin position="359"/>
        <end position="361"/>
    </location>
</feature>
<feature type="strand" evidence="5">
    <location>
        <begin position="363"/>
        <end position="369"/>
    </location>
</feature>
<feature type="helix" evidence="5">
    <location>
        <begin position="376"/>
        <end position="378"/>
    </location>
</feature>
<feature type="helix" evidence="5">
    <location>
        <begin position="395"/>
        <end position="397"/>
    </location>
</feature>
<feature type="helix" evidence="5">
    <location>
        <begin position="400"/>
        <end position="402"/>
    </location>
</feature>
<feature type="strand" evidence="5">
    <location>
        <begin position="410"/>
        <end position="417"/>
    </location>
</feature>
<feature type="strand" evidence="5">
    <location>
        <begin position="422"/>
        <end position="445"/>
    </location>
</feature>
<feature type="strand" evidence="5">
    <location>
        <begin position="450"/>
        <end position="457"/>
    </location>
</feature>
<feature type="strand" evidence="5">
    <location>
        <begin position="463"/>
        <end position="474"/>
    </location>
</feature>
<feature type="helix" evidence="5">
    <location>
        <begin position="478"/>
        <end position="481"/>
    </location>
</feature>
<feature type="strand" evidence="5">
    <location>
        <begin position="486"/>
        <end position="490"/>
    </location>
</feature>
<feature type="turn" evidence="5">
    <location>
        <begin position="491"/>
        <end position="495"/>
    </location>
</feature>
<feature type="strand" evidence="5">
    <location>
        <begin position="496"/>
        <end position="500"/>
    </location>
</feature>
<feature type="strand" evidence="5">
    <location>
        <begin position="505"/>
        <end position="509"/>
    </location>
</feature>
<feature type="helix" evidence="5">
    <location>
        <begin position="516"/>
        <end position="518"/>
    </location>
</feature>
<feature type="strand" evidence="5">
    <location>
        <begin position="520"/>
        <end position="522"/>
    </location>
</feature>
<feature type="strand" evidence="5">
    <location>
        <begin position="528"/>
        <end position="530"/>
    </location>
</feature>
<feature type="strand" evidence="5">
    <location>
        <begin position="533"/>
        <end position="537"/>
    </location>
</feature>
<feature type="helix" evidence="5">
    <location>
        <begin position="553"/>
        <end position="555"/>
    </location>
</feature>
<feature type="strand" evidence="5">
    <location>
        <begin position="557"/>
        <end position="559"/>
    </location>
</feature>
<feature type="strand" evidence="5">
    <location>
        <begin position="566"/>
        <end position="568"/>
    </location>
</feature>
<feature type="turn" evidence="5">
    <location>
        <begin position="569"/>
        <end position="571"/>
    </location>
</feature>
<feature type="strand" evidence="5">
    <location>
        <begin position="574"/>
        <end position="578"/>
    </location>
</feature>
<feature type="turn" evidence="5">
    <location>
        <begin position="579"/>
        <end position="581"/>
    </location>
</feature>
<feature type="strand" evidence="5">
    <location>
        <begin position="584"/>
        <end position="589"/>
    </location>
</feature>
<feature type="strand" evidence="6">
    <location>
        <begin position="592"/>
        <end position="595"/>
    </location>
</feature>
<feature type="strand" evidence="5">
    <location>
        <begin position="598"/>
        <end position="604"/>
    </location>
</feature>
<feature type="strand" evidence="6">
    <location>
        <begin position="614"/>
        <end position="616"/>
    </location>
</feature>
<feature type="strand" evidence="5">
    <location>
        <begin position="620"/>
        <end position="626"/>
    </location>
</feature>
<feature type="strand" evidence="5">
    <location>
        <begin position="632"/>
        <end position="647"/>
    </location>
</feature>
<feature type="helix" evidence="6">
    <location>
        <begin position="648"/>
        <end position="650"/>
    </location>
</feature>
<feature type="strand" evidence="5">
    <location>
        <begin position="657"/>
        <end position="663"/>
    </location>
</feature>
<feature type="strand" evidence="5">
    <location>
        <begin position="667"/>
        <end position="677"/>
    </location>
</feature>
<feature type="strand" evidence="5">
    <location>
        <begin position="680"/>
        <end position="691"/>
    </location>
</feature>
<feature type="strand" evidence="5">
    <location>
        <begin position="696"/>
        <end position="700"/>
    </location>
</feature>
<feature type="strand" evidence="5">
    <location>
        <begin position="705"/>
        <end position="714"/>
    </location>
</feature>
<feature type="strand" evidence="5">
    <location>
        <begin position="721"/>
        <end position="728"/>
    </location>
</feature>
<feature type="strand" evidence="5">
    <location>
        <begin position="733"/>
        <end position="740"/>
    </location>
</feature>
<dbReference type="EMBL" id="Y00557">
    <property type="protein sequence ID" value="CAA68637.1"/>
    <property type="molecule type" value="Genomic_DNA"/>
</dbReference>
<dbReference type="EMBL" id="M36855">
    <property type="protein sequence ID" value="AAA27528.1"/>
    <property type="molecule type" value="Genomic_DNA"/>
</dbReference>
<dbReference type="EMBL" id="X51746">
    <property type="protein sequence ID" value="CAA36035.1"/>
    <property type="molecule type" value="Genomic_DNA"/>
</dbReference>
<dbReference type="EMBL" id="AE003853">
    <property type="protein sequence ID" value="AAF96131.1"/>
    <property type="molecule type" value="Genomic_DNA"/>
</dbReference>
<dbReference type="PIR" id="A41462">
    <property type="entry name" value="A41462"/>
</dbReference>
<dbReference type="PIR" id="A82486">
    <property type="entry name" value="A82486"/>
</dbReference>
<dbReference type="RefSeq" id="NP_232618.1">
    <property type="nucleotide sequence ID" value="NC_002506.1"/>
</dbReference>
<dbReference type="PDB" id="1XEZ">
    <property type="method" value="X-ray"/>
    <property type="resolution" value="2.30 A"/>
    <property type="chains" value="A=26-741"/>
</dbReference>
<dbReference type="PDB" id="3O44">
    <property type="method" value="X-ray"/>
    <property type="resolution" value="2.88 A"/>
    <property type="chains" value="A/B/C/D/E/F/G/H/I/J/K/L/M/N=149-741"/>
</dbReference>
<dbReference type="PDB" id="4GX7">
    <property type="method" value="X-ray"/>
    <property type="resolution" value="2.85 A"/>
    <property type="chains" value="A/B/C/D/E/F=611-741"/>
</dbReference>
<dbReference type="PDB" id="7YL9">
    <property type="method" value="EM"/>
    <property type="resolution" value="4.70 A"/>
    <property type="chains" value="H/I/J/K/L/M/N=149-741"/>
</dbReference>
<dbReference type="PDBsum" id="1XEZ"/>
<dbReference type="PDBsum" id="3O44"/>
<dbReference type="PDBsum" id="4GX7"/>
<dbReference type="PDBsum" id="7YL9"/>
<dbReference type="SMR" id="P09545"/>
<dbReference type="MINT" id="P09545"/>
<dbReference type="STRING" id="243277.VC_A0219"/>
<dbReference type="TCDB" id="1.C.14.1.1">
    <property type="family name" value="the cytohemolysin (chl) family"/>
</dbReference>
<dbReference type="UniLectin" id="P09545"/>
<dbReference type="DNASU" id="2612877"/>
<dbReference type="EnsemblBacteria" id="AAF96131">
    <property type="protein sequence ID" value="AAF96131"/>
    <property type="gene ID" value="VC_A0219"/>
</dbReference>
<dbReference type="KEGG" id="vch:VC_A0219"/>
<dbReference type="PATRIC" id="fig|243277.26.peg.2852"/>
<dbReference type="eggNOG" id="ENOG502ZBG7">
    <property type="taxonomic scope" value="Bacteria"/>
</dbReference>
<dbReference type="HOGENOM" id="CLU_439829_0_0_6"/>
<dbReference type="EvolutionaryTrace" id="P09545"/>
<dbReference type="PHI-base" id="PHI:12209"/>
<dbReference type="PHI-base" id="PHI:9438"/>
<dbReference type="Proteomes" id="UP000000584">
    <property type="component" value="Chromosome 2"/>
</dbReference>
<dbReference type="GO" id="GO:0005576">
    <property type="term" value="C:extracellular region"/>
    <property type="evidence" value="ECO:0007669"/>
    <property type="project" value="UniProtKB-SubCell"/>
</dbReference>
<dbReference type="GO" id="GO:0020002">
    <property type="term" value="C:host cell plasma membrane"/>
    <property type="evidence" value="ECO:0007669"/>
    <property type="project" value="UniProtKB-SubCell"/>
</dbReference>
<dbReference type="GO" id="GO:0016020">
    <property type="term" value="C:membrane"/>
    <property type="evidence" value="ECO:0007669"/>
    <property type="project" value="UniProtKB-KW"/>
</dbReference>
<dbReference type="GO" id="GO:0030246">
    <property type="term" value="F:carbohydrate binding"/>
    <property type="evidence" value="ECO:0007669"/>
    <property type="project" value="UniProtKB-KW"/>
</dbReference>
<dbReference type="GO" id="GO:0042802">
    <property type="term" value="F:identical protein binding"/>
    <property type="evidence" value="ECO:0000353"/>
    <property type="project" value="IntAct"/>
</dbReference>
<dbReference type="GO" id="GO:0090729">
    <property type="term" value="F:toxin activity"/>
    <property type="evidence" value="ECO:0007669"/>
    <property type="project" value="UniProtKB-KW"/>
</dbReference>
<dbReference type="GO" id="GO:0051715">
    <property type="term" value="P:cytolysis in another organism"/>
    <property type="evidence" value="ECO:0007669"/>
    <property type="project" value="InterPro"/>
</dbReference>
<dbReference type="CDD" id="cd23423">
    <property type="entry name" value="beta-trefoil_Ricin_hemolysin"/>
    <property type="match status" value="1"/>
</dbReference>
<dbReference type="CDD" id="cd09302">
    <property type="entry name" value="Jacalin_like"/>
    <property type="match status" value="1"/>
</dbReference>
<dbReference type="Gene3D" id="3.30.110.130">
    <property type="entry name" value="Hemolytic toxin, N-terminal domain"/>
    <property type="match status" value="1"/>
</dbReference>
<dbReference type="Gene3D" id="2.100.10.30">
    <property type="entry name" value="Jacalin-like lectin domain"/>
    <property type="match status" value="1"/>
</dbReference>
<dbReference type="Gene3D" id="2.70.240.20">
    <property type="entry name" value="Leukocidin/Hemolysin toxin, cytolysin domain"/>
    <property type="match status" value="1"/>
</dbReference>
<dbReference type="Gene3D" id="6.20.40.20">
    <property type="entry name" value="Leukocidin/Hemolysin toxin, pre-stem domain"/>
    <property type="match status" value="1"/>
</dbReference>
<dbReference type="InterPro" id="IPR032496">
    <property type="entry name" value="Hemolysin_beta-prism_lec"/>
</dbReference>
<dbReference type="InterPro" id="IPR022220">
    <property type="entry name" value="Hemolysin_N"/>
</dbReference>
<dbReference type="InterPro" id="IPR043080">
    <property type="entry name" value="Hemolysin_N_sf"/>
</dbReference>
<dbReference type="InterPro" id="IPR044883">
    <property type="entry name" value="Hemolysin_pre-stem_dom_sf"/>
</dbReference>
<dbReference type="InterPro" id="IPR036404">
    <property type="entry name" value="Jacalin-like_lectin_dom_sf"/>
</dbReference>
<dbReference type="InterPro" id="IPR016183">
    <property type="entry name" value="Leukocidin/Hemolysin_toxin"/>
</dbReference>
<dbReference type="InterPro" id="IPR036435">
    <property type="entry name" value="Leukocidin/porin_MspA_sf"/>
</dbReference>
<dbReference type="InterPro" id="IPR035992">
    <property type="entry name" value="Ricin_B-like_lectins"/>
</dbReference>
<dbReference type="InterPro" id="IPR000772">
    <property type="entry name" value="Ricin_B_lectin"/>
</dbReference>
<dbReference type="Pfam" id="PF16458">
    <property type="entry name" value="Beta-prism_lec"/>
    <property type="match status" value="1"/>
</dbReference>
<dbReference type="Pfam" id="PF12563">
    <property type="entry name" value="Hemolysin_N"/>
    <property type="match status" value="1"/>
</dbReference>
<dbReference type="Pfam" id="PF07968">
    <property type="entry name" value="Leukocidin"/>
    <property type="match status" value="1"/>
</dbReference>
<dbReference type="SMART" id="SM00458">
    <property type="entry name" value="RICIN"/>
    <property type="match status" value="1"/>
</dbReference>
<dbReference type="SUPFAM" id="SSF56959">
    <property type="entry name" value="Leukocidin-like"/>
    <property type="match status" value="1"/>
</dbReference>
<dbReference type="SUPFAM" id="SSF50370">
    <property type="entry name" value="Ricin B-like lectins"/>
    <property type="match status" value="1"/>
</dbReference>
<dbReference type="PROSITE" id="PS50231">
    <property type="entry name" value="RICIN_B_LECTIN"/>
    <property type="match status" value="1"/>
</dbReference>